<dbReference type="EC" id="2.1.1.182" evidence="1"/>
<dbReference type="EMBL" id="CP000269">
    <property type="protein sequence ID" value="ABR88294.1"/>
    <property type="molecule type" value="Genomic_DNA"/>
</dbReference>
<dbReference type="RefSeq" id="WP_012078285.1">
    <property type="nucleotide sequence ID" value="NC_009659.1"/>
</dbReference>
<dbReference type="SMR" id="A6SV13"/>
<dbReference type="STRING" id="375286.mma_0420"/>
<dbReference type="KEGG" id="mms:mma_0420"/>
<dbReference type="eggNOG" id="COG0030">
    <property type="taxonomic scope" value="Bacteria"/>
</dbReference>
<dbReference type="HOGENOM" id="CLU_041220_0_1_4"/>
<dbReference type="OrthoDB" id="9814755at2"/>
<dbReference type="Proteomes" id="UP000006388">
    <property type="component" value="Chromosome"/>
</dbReference>
<dbReference type="GO" id="GO:0005829">
    <property type="term" value="C:cytosol"/>
    <property type="evidence" value="ECO:0007669"/>
    <property type="project" value="TreeGrafter"/>
</dbReference>
<dbReference type="GO" id="GO:0052908">
    <property type="term" value="F:16S rRNA (adenine(1518)-N(6)/adenine(1519)-N(6))-dimethyltransferase activity"/>
    <property type="evidence" value="ECO:0007669"/>
    <property type="project" value="UniProtKB-EC"/>
</dbReference>
<dbReference type="GO" id="GO:0003723">
    <property type="term" value="F:RNA binding"/>
    <property type="evidence" value="ECO:0007669"/>
    <property type="project" value="UniProtKB-KW"/>
</dbReference>
<dbReference type="FunFam" id="1.10.8.100:FF:000001">
    <property type="entry name" value="Ribosomal RNA small subunit methyltransferase A"/>
    <property type="match status" value="1"/>
</dbReference>
<dbReference type="Gene3D" id="1.10.8.100">
    <property type="entry name" value="Ribosomal RNA adenine dimethylase-like, domain 2"/>
    <property type="match status" value="1"/>
</dbReference>
<dbReference type="Gene3D" id="3.40.50.150">
    <property type="entry name" value="Vaccinia Virus protein VP39"/>
    <property type="match status" value="1"/>
</dbReference>
<dbReference type="HAMAP" id="MF_00607">
    <property type="entry name" value="16SrRNA_methyltr_A"/>
    <property type="match status" value="1"/>
</dbReference>
<dbReference type="InterPro" id="IPR001737">
    <property type="entry name" value="KsgA/Erm"/>
</dbReference>
<dbReference type="InterPro" id="IPR023165">
    <property type="entry name" value="rRNA_Ade_diMease-like_C"/>
</dbReference>
<dbReference type="InterPro" id="IPR020596">
    <property type="entry name" value="rRNA_Ade_Mease_Trfase_CS"/>
</dbReference>
<dbReference type="InterPro" id="IPR020598">
    <property type="entry name" value="rRNA_Ade_methylase_Trfase_N"/>
</dbReference>
<dbReference type="InterPro" id="IPR011530">
    <property type="entry name" value="rRNA_adenine_dimethylase"/>
</dbReference>
<dbReference type="InterPro" id="IPR029063">
    <property type="entry name" value="SAM-dependent_MTases_sf"/>
</dbReference>
<dbReference type="NCBIfam" id="TIGR00755">
    <property type="entry name" value="ksgA"/>
    <property type="match status" value="1"/>
</dbReference>
<dbReference type="PANTHER" id="PTHR11727">
    <property type="entry name" value="DIMETHYLADENOSINE TRANSFERASE"/>
    <property type="match status" value="1"/>
</dbReference>
<dbReference type="PANTHER" id="PTHR11727:SF7">
    <property type="entry name" value="DIMETHYLADENOSINE TRANSFERASE-RELATED"/>
    <property type="match status" value="1"/>
</dbReference>
<dbReference type="Pfam" id="PF00398">
    <property type="entry name" value="RrnaAD"/>
    <property type="match status" value="1"/>
</dbReference>
<dbReference type="SMART" id="SM00650">
    <property type="entry name" value="rADc"/>
    <property type="match status" value="1"/>
</dbReference>
<dbReference type="SUPFAM" id="SSF53335">
    <property type="entry name" value="S-adenosyl-L-methionine-dependent methyltransferases"/>
    <property type="match status" value="1"/>
</dbReference>
<dbReference type="PROSITE" id="PS01131">
    <property type="entry name" value="RRNA_A_DIMETH"/>
    <property type="match status" value="1"/>
</dbReference>
<dbReference type="PROSITE" id="PS51689">
    <property type="entry name" value="SAM_RNA_A_N6_MT"/>
    <property type="match status" value="1"/>
</dbReference>
<keyword id="KW-0963">Cytoplasm</keyword>
<keyword id="KW-0489">Methyltransferase</keyword>
<keyword id="KW-0694">RNA-binding</keyword>
<keyword id="KW-0698">rRNA processing</keyword>
<keyword id="KW-0949">S-adenosyl-L-methionine</keyword>
<keyword id="KW-0808">Transferase</keyword>
<name>RSMA_JANMA</name>
<accession>A6SV13</accession>
<proteinExistence type="inferred from homology"/>
<gene>
    <name evidence="1" type="primary">rsmA</name>
    <name evidence="1" type="synonym">ksgA</name>
    <name type="ordered locus">mma_0420</name>
</gene>
<feature type="chain" id="PRO_1000130285" description="Ribosomal RNA small subunit methyltransferase A">
    <location>
        <begin position="1"/>
        <end position="255"/>
    </location>
</feature>
<feature type="binding site" evidence="1">
    <location>
        <position position="12"/>
    </location>
    <ligand>
        <name>S-adenosyl-L-methionine</name>
        <dbReference type="ChEBI" id="CHEBI:59789"/>
    </ligand>
</feature>
<feature type="binding site" evidence="1">
    <location>
        <position position="14"/>
    </location>
    <ligand>
        <name>S-adenosyl-L-methionine</name>
        <dbReference type="ChEBI" id="CHEBI:59789"/>
    </ligand>
</feature>
<feature type="binding site" evidence="1">
    <location>
        <position position="39"/>
    </location>
    <ligand>
        <name>S-adenosyl-L-methionine</name>
        <dbReference type="ChEBI" id="CHEBI:59789"/>
    </ligand>
</feature>
<feature type="binding site" evidence="1">
    <location>
        <position position="60"/>
    </location>
    <ligand>
        <name>S-adenosyl-L-methionine</name>
        <dbReference type="ChEBI" id="CHEBI:59789"/>
    </ligand>
</feature>
<feature type="binding site" evidence="1">
    <location>
        <position position="84"/>
    </location>
    <ligand>
        <name>S-adenosyl-L-methionine</name>
        <dbReference type="ChEBI" id="CHEBI:59789"/>
    </ligand>
</feature>
<feature type="binding site" evidence="1">
    <location>
        <position position="106"/>
    </location>
    <ligand>
        <name>S-adenosyl-L-methionine</name>
        <dbReference type="ChEBI" id="CHEBI:59789"/>
    </ligand>
</feature>
<organism>
    <name type="scientific">Janthinobacterium sp. (strain Marseille)</name>
    <name type="common">Minibacterium massiliensis</name>
    <dbReference type="NCBI Taxonomy" id="375286"/>
    <lineage>
        <taxon>Bacteria</taxon>
        <taxon>Pseudomonadati</taxon>
        <taxon>Pseudomonadota</taxon>
        <taxon>Betaproteobacteria</taxon>
        <taxon>Burkholderiales</taxon>
        <taxon>Oxalobacteraceae</taxon>
        <taxon>Janthinobacterium</taxon>
    </lineage>
</organism>
<comment type="function">
    <text evidence="1">Specifically dimethylates two adjacent adenosines (A1518 and A1519) in the loop of a conserved hairpin near the 3'-end of 16S rRNA in the 30S particle. May play a critical role in biogenesis of 30S subunits.</text>
</comment>
<comment type="catalytic activity">
    <reaction evidence="1">
        <text>adenosine(1518)/adenosine(1519) in 16S rRNA + 4 S-adenosyl-L-methionine = N(6)-dimethyladenosine(1518)/N(6)-dimethyladenosine(1519) in 16S rRNA + 4 S-adenosyl-L-homocysteine + 4 H(+)</text>
        <dbReference type="Rhea" id="RHEA:19609"/>
        <dbReference type="Rhea" id="RHEA-COMP:10232"/>
        <dbReference type="Rhea" id="RHEA-COMP:10233"/>
        <dbReference type="ChEBI" id="CHEBI:15378"/>
        <dbReference type="ChEBI" id="CHEBI:57856"/>
        <dbReference type="ChEBI" id="CHEBI:59789"/>
        <dbReference type="ChEBI" id="CHEBI:74411"/>
        <dbReference type="ChEBI" id="CHEBI:74493"/>
        <dbReference type="EC" id="2.1.1.182"/>
    </reaction>
</comment>
<comment type="subcellular location">
    <subcellularLocation>
        <location evidence="1">Cytoplasm</location>
    </subcellularLocation>
</comment>
<comment type="similarity">
    <text evidence="1">Belongs to the class I-like SAM-binding methyltransferase superfamily. rRNA adenine N(6)-methyltransferase family. RsmA subfamily.</text>
</comment>
<reference key="1">
    <citation type="journal article" date="2007" name="PLoS Genet.">
        <title>Genome analysis of Minibacterium massiliensis highlights the convergent evolution of water-living bacteria.</title>
        <authorList>
            <person name="Audic S."/>
            <person name="Robert C."/>
            <person name="Campagna B."/>
            <person name="Parinello H."/>
            <person name="Claverie J.-M."/>
            <person name="Raoult D."/>
            <person name="Drancourt M."/>
        </authorList>
    </citation>
    <scope>NUCLEOTIDE SEQUENCE [LARGE SCALE GENOMIC DNA]</scope>
    <source>
        <strain>Marseille</strain>
    </source>
</reference>
<sequence length="255" mass="28949">MKHIPRKRFGQNFLTDDTVLYNIIRAIDPQPQDTMVEIGPGLAAMTRLLLEGVQQMHVVELDRDLVERLKKSFDPKRLIIHSADALQFDFSTIPVPAGSKLRVVGNLPYNISSPLLFHLAEMAPHVQDQHFMLQKEVVERMVAEPGSKVYGRLSVMLQWRYHMELMFVVPPTAFDPPPRVESAIVRMIPLAQPLPCDQAKLEQVVLKAFSQRRKVIRNCLAGMFAESDLLEVGIDPQLRPETIPLAQYVALANRL</sequence>
<protein>
    <recommendedName>
        <fullName evidence="1">Ribosomal RNA small subunit methyltransferase A</fullName>
        <ecNumber evidence="1">2.1.1.182</ecNumber>
    </recommendedName>
    <alternativeName>
        <fullName evidence="1">16S rRNA (adenine(1518)-N(6)/adenine(1519)-N(6))-dimethyltransferase</fullName>
    </alternativeName>
    <alternativeName>
        <fullName evidence="1">16S rRNA dimethyladenosine transferase</fullName>
    </alternativeName>
    <alternativeName>
        <fullName evidence="1">16S rRNA dimethylase</fullName>
    </alternativeName>
    <alternativeName>
        <fullName evidence="1">S-adenosylmethionine-6-N', N'-adenosyl(rRNA) dimethyltransferase</fullName>
    </alternativeName>
</protein>
<evidence type="ECO:0000255" key="1">
    <source>
        <dbReference type="HAMAP-Rule" id="MF_00607"/>
    </source>
</evidence>